<reference key="1">
    <citation type="journal article" date="2007" name="Nature">
        <title>Evolution of genes and genomes on the Drosophila phylogeny.</title>
        <authorList>
            <consortium name="Drosophila 12 genomes consortium"/>
        </authorList>
    </citation>
    <scope>NUCLEOTIDE SEQUENCE [LARGE SCALE GENOMIC DNA]</scope>
    <source>
        <strain>Tucson 14024-0371.13</strain>
    </source>
</reference>
<protein>
    <recommendedName>
        <fullName evidence="1">Small ribosomal subunit protein eS1</fullName>
    </recommendedName>
    <alternativeName>
        <fullName evidence="3">40S ribosomal protein S3a</fullName>
    </alternativeName>
</protein>
<feature type="initiator methionine" description="Removed" evidence="1">
    <location>
        <position position="1"/>
    </location>
</feature>
<feature type="chain" id="PRO_0000389306" description="Small ribosomal subunit protein eS1">
    <location>
        <begin position="2"/>
        <end position="268"/>
    </location>
</feature>
<feature type="region of interest" description="Disordered" evidence="2">
    <location>
        <begin position="1"/>
        <end position="21"/>
    </location>
</feature>
<feature type="region of interest" description="Disordered" evidence="2">
    <location>
        <begin position="238"/>
        <end position="268"/>
    </location>
</feature>
<sequence>MAVGKNKGLSKGGKKGGKKKVVDPFSRKDWYDVKAPNMFQTRQIGKTLVNRTQGQRIASDYLKGRVFEVSLADLQKDIDPERSFRKFRLIAEDVQDRNVLCNFHGMDLTTDKYRSMVKKWQTLIEAIVEAKTIDGYLLRVFCIGFTAKDQQSQRKTCYAQQSQVRKIRARMTDIINNEVSGADLKQLVNKLALDSIAKDIEKSCQRIYPLHDVYIRKVKVLKKPRFDVSKLLELHGDGGGKSSDAVVSTEGAVIDRPEGYEPPVQEAV</sequence>
<comment type="function">
    <text evidence="1">Essential for oogenesis; required for late follicle cell development.</text>
</comment>
<comment type="subunit">
    <text evidence="1">Component of the small ribosomal subunit. Mature ribosomes consist of a small (40S) and a large (60S) subunit. The 40S subunit contains about 33 different proteins and 1 molecule of RNA (18S). The 60S subunit contains about 49 different proteins and 3 molecules of RNA (28S, 5.8S and 5S).</text>
</comment>
<comment type="subcellular location">
    <subcellularLocation>
        <location evidence="1">Cytoplasm</location>
    </subcellularLocation>
</comment>
<comment type="similarity">
    <text evidence="1">Belongs to the eukaryotic ribosomal protein eS1 family.</text>
</comment>
<gene>
    <name evidence="1" type="primary">RpS3A</name>
    <name type="ORF">GF19047</name>
</gene>
<proteinExistence type="inferred from homology"/>
<organism>
    <name type="scientific">Drosophila ananassae</name>
    <name type="common">Fruit fly</name>
    <dbReference type="NCBI Taxonomy" id="7217"/>
    <lineage>
        <taxon>Eukaryota</taxon>
        <taxon>Metazoa</taxon>
        <taxon>Ecdysozoa</taxon>
        <taxon>Arthropoda</taxon>
        <taxon>Hexapoda</taxon>
        <taxon>Insecta</taxon>
        <taxon>Pterygota</taxon>
        <taxon>Neoptera</taxon>
        <taxon>Endopterygota</taxon>
        <taxon>Diptera</taxon>
        <taxon>Brachycera</taxon>
        <taxon>Muscomorpha</taxon>
        <taxon>Ephydroidea</taxon>
        <taxon>Drosophilidae</taxon>
        <taxon>Drosophila</taxon>
        <taxon>Sophophora</taxon>
    </lineage>
</organism>
<evidence type="ECO:0000255" key="1">
    <source>
        <dbReference type="HAMAP-Rule" id="MF_03122"/>
    </source>
</evidence>
<evidence type="ECO:0000256" key="2">
    <source>
        <dbReference type="SAM" id="MobiDB-lite"/>
    </source>
</evidence>
<evidence type="ECO:0000305" key="3"/>
<name>RS3A_DROAN</name>
<dbReference type="EMBL" id="CH902655">
    <property type="protein sequence ID" value="EDV33659.1"/>
    <property type="molecule type" value="Genomic_DNA"/>
</dbReference>
<dbReference type="SMR" id="B3N1G9"/>
<dbReference type="FunCoup" id="B3N1G9">
    <property type="interactions" value="920"/>
</dbReference>
<dbReference type="STRING" id="7217.B3N1G9"/>
<dbReference type="EnsemblMetazoa" id="FBtr0123747">
    <property type="protein sequence ID" value="FBpp0122239"/>
    <property type="gene ID" value="FBgn0096059"/>
</dbReference>
<dbReference type="EnsemblMetazoa" id="XM_001967368.4">
    <property type="protein sequence ID" value="XP_001967404.1"/>
    <property type="gene ID" value="LOC6501811"/>
</dbReference>
<dbReference type="GeneID" id="6501811"/>
<dbReference type="KEGG" id="dan:6501811"/>
<dbReference type="CTD" id="6189"/>
<dbReference type="eggNOG" id="KOG1628">
    <property type="taxonomic scope" value="Eukaryota"/>
</dbReference>
<dbReference type="HOGENOM" id="CLU_062507_0_1_1"/>
<dbReference type="InParanoid" id="B3N1G9"/>
<dbReference type="OMA" id="MCEIITR"/>
<dbReference type="OrthoDB" id="9834376at2759"/>
<dbReference type="PhylomeDB" id="B3N1G9"/>
<dbReference type="ChiTaRS" id="RpS3A">
    <property type="organism name" value="fly"/>
</dbReference>
<dbReference type="Proteomes" id="UP000007801">
    <property type="component" value="Unassembled WGS sequence"/>
</dbReference>
<dbReference type="GO" id="GO:0022627">
    <property type="term" value="C:cytosolic small ribosomal subunit"/>
    <property type="evidence" value="ECO:0007669"/>
    <property type="project" value="UniProtKB-UniRule"/>
</dbReference>
<dbReference type="GO" id="GO:0003735">
    <property type="term" value="F:structural constituent of ribosome"/>
    <property type="evidence" value="ECO:0007669"/>
    <property type="project" value="UniProtKB-UniRule"/>
</dbReference>
<dbReference type="GO" id="GO:0048477">
    <property type="term" value="P:oogenesis"/>
    <property type="evidence" value="ECO:0007669"/>
    <property type="project" value="UniProtKB-KW"/>
</dbReference>
<dbReference type="GO" id="GO:0006412">
    <property type="term" value="P:translation"/>
    <property type="evidence" value="ECO:0007669"/>
    <property type="project" value="UniProtKB-UniRule"/>
</dbReference>
<dbReference type="HAMAP" id="MF_03122">
    <property type="entry name" value="Ribosomal_eS1_euk"/>
    <property type="match status" value="1"/>
</dbReference>
<dbReference type="InterPro" id="IPR001593">
    <property type="entry name" value="Ribosomal_eS1"/>
</dbReference>
<dbReference type="InterPro" id="IPR018281">
    <property type="entry name" value="Ribosomal_eS1_CS"/>
</dbReference>
<dbReference type="InterPro" id="IPR027500">
    <property type="entry name" value="Ribosomal_eS1_euk"/>
</dbReference>
<dbReference type="PANTHER" id="PTHR11830">
    <property type="entry name" value="40S RIBOSOMAL PROTEIN S3A"/>
    <property type="match status" value="1"/>
</dbReference>
<dbReference type="Pfam" id="PF01015">
    <property type="entry name" value="Ribosomal_S3Ae"/>
    <property type="match status" value="1"/>
</dbReference>
<dbReference type="SMART" id="SM01397">
    <property type="entry name" value="Ribosomal_S3Ae"/>
    <property type="match status" value="1"/>
</dbReference>
<dbReference type="PROSITE" id="PS01191">
    <property type="entry name" value="RIBOSOMAL_S3AE"/>
    <property type="match status" value="1"/>
</dbReference>
<keyword id="KW-0963">Cytoplasm</keyword>
<keyword id="KW-0217">Developmental protein</keyword>
<keyword id="KW-0221">Differentiation</keyword>
<keyword id="KW-0896">Oogenesis</keyword>
<keyword id="KW-1185">Reference proteome</keyword>
<keyword id="KW-0687">Ribonucleoprotein</keyword>
<keyword id="KW-0689">Ribosomal protein</keyword>
<accession>B3N1G9</accession>